<accession>Q8H6Z4</accession>
<proteinExistence type="evidence at transcript level"/>
<reference key="1">
    <citation type="journal article" date="2003" name="Genome Res.">
        <title>EST mining and functional expression assays identify extracellular effector proteins from the plant pathogen Phytophthora.</title>
        <authorList>
            <person name="Torto T.A."/>
            <person name="Li S."/>
            <person name="Styer A."/>
            <person name="Huitema E."/>
            <person name="Testa A."/>
            <person name="Gow N.A."/>
            <person name="van West P."/>
            <person name="Kamoun S."/>
        </authorList>
    </citation>
    <scope>NUCLEOTIDE SEQUENCE [MRNA]</scope>
    <scope>INDUCTION</scope>
    <scope>FUNCTION</scope>
    <source>
        <strain>DDR7602</strain>
    </source>
</reference>
<reference key="2">
    <citation type="journal article" date="2009" name="Nature">
        <title>Genome sequence and analysis of the Irish potato famine pathogen Phytophthora infestans.</title>
        <authorList>
            <consortium name="The Broad Institute Genome Sequencing Platform"/>
            <person name="Haas B.J."/>
            <person name="Kamoun S."/>
            <person name="Zody M.C."/>
            <person name="Jiang R.H."/>
            <person name="Handsaker R.E."/>
            <person name="Cano L.M."/>
            <person name="Grabherr M."/>
            <person name="Kodira C.D."/>
            <person name="Raffaele S."/>
            <person name="Torto-Alalibo T."/>
            <person name="Bozkurt T.O."/>
            <person name="Ah-Fong A.M."/>
            <person name="Alvarado L."/>
            <person name="Anderson V.L."/>
            <person name="Armstrong M.R."/>
            <person name="Avrova A."/>
            <person name="Baxter L."/>
            <person name="Beynon J."/>
            <person name="Boevink P.C."/>
            <person name="Bollmann S.R."/>
            <person name="Bos J.I."/>
            <person name="Bulone V."/>
            <person name="Cai G."/>
            <person name="Cakir C."/>
            <person name="Carrington J.C."/>
            <person name="Chawner M."/>
            <person name="Conti L."/>
            <person name="Costanzo S."/>
            <person name="Ewan R."/>
            <person name="Fahlgren N."/>
            <person name="Fischbach M.A."/>
            <person name="Fugelstad J."/>
            <person name="Gilroy E.M."/>
            <person name="Gnerre S."/>
            <person name="Green P.J."/>
            <person name="Grenville-Briggs L.J."/>
            <person name="Griffith J."/>
            <person name="Grunwald N.J."/>
            <person name="Horn K."/>
            <person name="Horner N.R."/>
            <person name="Hu C.H."/>
            <person name="Huitema E."/>
            <person name="Jeong D.H."/>
            <person name="Jones A.M."/>
            <person name="Jones J.D."/>
            <person name="Jones R.W."/>
            <person name="Karlsson E.K."/>
            <person name="Kunjeti S.G."/>
            <person name="Lamour K."/>
            <person name="Liu Z."/>
            <person name="Ma L."/>
            <person name="Maclean D."/>
            <person name="Chibucos M.C."/>
            <person name="McDonald H."/>
            <person name="McWalters J."/>
            <person name="Meijer H.J."/>
            <person name="Morgan W."/>
            <person name="Morris P.F."/>
            <person name="Munro C.A."/>
            <person name="O'Neill K."/>
            <person name="Ospina-Giraldo M."/>
            <person name="Pinzon A."/>
            <person name="Pritchard L."/>
            <person name="Ramsahoye B."/>
            <person name="Ren Q."/>
            <person name="Restrepo S."/>
            <person name="Roy S."/>
            <person name="Sadanandom A."/>
            <person name="Savidor A."/>
            <person name="Schornack S."/>
            <person name="Schwartz D.C."/>
            <person name="Schumann U.D."/>
            <person name="Schwessinger B."/>
            <person name="Seyer L."/>
            <person name="Sharpe T."/>
            <person name="Silvar C."/>
            <person name="Song J."/>
            <person name="Studholme D.J."/>
            <person name="Sykes S."/>
            <person name="Thines M."/>
            <person name="van de Vondervoort P.J."/>
            <person name="Phuntumart V."/>
            <person name="Wawra S."/>
            <person name="Weide R."/>
            <person name="Win J."/>
            <person name="Young C."/>
            <person name="Zhou S."/>
            <person name="Fry W."/>
            <person name="Meyers B.C."/>
            <person name="van West P."/>
            <person name="Ristaino J."/>
            <person name="Govers F."/>
            <person name="Birch P.R."/>
            <person name="Whisson S.C."/>
            <person name="Judelson H.S."/>
            <person name="Nusbaum C."/>
        </authorList>
    </citation>
    <scope>DOMAIN</scope>
    <scope>FUNCTION</scope>
</reference>
<reference key="3">
    <citation type="journal article" date="2010" name="Proc. Natl. Acad. Sci. U.S.A.">
        <title>Ancient class of translocated oomycete effectors targets the host nucleus.</title>
        <authorList>
            <person name="Schornack S."/>
            <person name="van Damme M."/>
            <person name="Bozkurt T.O."/>
            <person name="Cano L.M."/>
            <person name="Smoker M."/>
            <person name="Thines M."/>
            <person name="Gaulin E."/>
            <person name="Kamoun S."/>
            <person name="Huitema E."/>
        </authorList>
    </citation>
    <scope>DOMAIN</scope>
    <scope>SUBCELLULAR LOCATION</scope>
    <scope>FUNCTION</scope>
</reference>
<evidence type="ECO:0000255" key="1"/>
<evidence type="ECO:0000255" key="2">
    <source>
        <dbReference type="PROSITE-ProRule" id="PRU00498"/>
    </source>
</evidence>
<evidence type="ECO:0000269" key="3">
    <source>
    </source>
</evidence>
<evidence type="ECO:0000269" key="4">
    <source>
    </source>
</evidence>
<evidence type="ECO:0000269" key="5">
    <source>
    </source>
</evidence>
<evidence type="ECO:0000303" key="6">
    <source>
    </source>
</evidence>
<evidence type="ECO:0000305" key="7"/>
<evidence type="ECO:0000305" key="8">
    <source>
    </source>
</evidence>
<feature type="signal peptide" evidence="1">
    <location>
        <begin position="1"/>
        <end position="17"/>
    </location>
</feature>
<feature type="chain" id="PRO_0000447407" description="Crinkler effector protein 2">
    <location>
        <begin position="18"/>
        <end position="456"/>
    </location>
</feature>
<feature type="region of interest" description="LQLFLAK domain" evidence="8">
    <location>
        <begin position="18"/>
        <end position="54"/>
    </location>
</feature>
<feature type="region of interest" description="DWL domain" evidence="8">
    <location>
        <begin position="55"/>
        <end position="136"/>
    </location>
</feature>
<feature type="short sequence motif" description="HVLVXXP motif" evidence="8">
    <location>
        <begin position="137"/>
        <end position="143"/>
    </location>
</feature>
<feature type="glycosylation site" description="N-linked (GlcNAc...) asparagine" evidence="2">
    <location>
        <position position="338"/>
    </location>
</feature>
<comment type="function">
    <text evidence="3 4 5">Secreted effector that effector that induces cell death when expressed in host plants (PubMed:19741609, PubMed:20847293). Induces the expression of defense response genes in tomato (PubMed:12840044).</text>
</comment>
<comment type="subcellular location">
    <subcellularLocation>
        <location evidence="5">Secreted</location>
    </subcellularLocation>
    <subcellularLocation>
        <location evidence="5">Host nucleus</location>
    </subcellularLocation>
</comment>
<comment type="induction">
    <text evidence="3">Expressed during colonization of the host plant tomato by P.infestans.</text>
</comment>
<comment type="domain">
    <text evidence="5">The CRN proteins have modular architectures that include a signal peptide, a conserved N-terminus, and highly diverse C-terminal domains. The conserved CRN N-terminus harbors a distinct LXLFLAK motif, which is followed by the conserved DWL domain. A highly conserved HVLVXXP motif marks the end of the CRN N-terminal domains and forms a junction where diverse C-terminal domains are fused. The conserved CRN N-terminus mediates the translocation into the plant host cells.</text>
</comment>
<comment type="similarity">
    <text evidence="7">Belongs to the Crinkler effector family.</text>
</comment>
<keyword id="KW-0325">Glycoprotein</keyword>
<keyword id="KW-1048">Host nucleus</keyword>
<keyword id="KW-0964">Secreted</keyword>
<keyword id="KW-0732">Signal</keyword>
<keyword id="KW-0843">Virulence</keyword>
<gene>
    <name evidence="6" type="primary">CRN2</name>
</gene>
<organism>
    <name type="scientific">Phytophthora infestans</name>
    <name type="common">Potato late blight agent</name>
    <name type="synonym">Botrytis infestans</name>
    <dbReference type="NCBI Taxonomy" id="4787"/>
    <lineage>
        <taxon>Eukaryota</taxon>
        <taxon>Sar</taxon>
        <taxon>Stramenopiles</taxon>
        <taxon>Oomycota</taxon>
        <taxon>Peronosporales</taxon>
        <taxon>Peronosporaceae</taxon>
        <taxon>Phytophthora</taxon>
    </lineage>
</organism>
<name>CRN2_PHYIN</name>
<sequence>MVKLVCAIVGVAGSAFPVDTDASQLVGDLKKAIKAENAMTFTGDAKDLQLFLAKQPVDDESGKEVVPVYRPSAEEMKEESFKWLPDEHRAALKLVEGESDDYIHALTAGEPILGSKTLTTWFYTKNNMELPSSEQIHVLVVVPDGAGGSASDTSRMDRLFDKVDKVYEHTVLSKRTRYVHSEMNSAKGNILLNDLKIRISPVDTVKFAGGVPTPAKEFKWKSDRTEEQQKEPYREYVVANIGDVLTNNKLCVVGVEKGVNILTVEVPGRDIVLAGRTDMIVLSDIAQKFPHYLPHLPGVRMLIEVKKVVTTASEFQALSELIALDIIATESVMALLTNLTNHWQFFWVSRKSDDRVIIETTTLIAPGEAFAVIRTLLDQSPSAGAEVSLPCFEKPVKRQKLSQLLPSISEASGSSGIRESIERYYDIASMLGPDLEMARAVASQVARSIPTLSYFS</sequence>
<dbReference type="EMBL" id="AF424677">
    <property type="protein sequence ID" value="AAN31502.1"/>
    <property type="molecule type" value="mRNA"/>
</dbReference>
<dbReference type="GlyCosmos" id="Q8H6Z4">
    <property type="glycosylation" value="1 site, No reported glycans"/>
</dbReference>
<dbReference type="VEuPathDB" id="FungiDB:PITG_17199"/>
<dbReference type="PHI-base" id="PHI:657"/>
<dbReference type="GO" id="GO:0005576">
    <property type="term" value="C:extracellular region"/>
    <property type="evidence" value="ECO:0007669"/>
    <property type="project" value="UniProtKB-SubCell"/>
</dbReference>
<dbReference type="GO" id="GO:0042025">
    <property type="term" value="C:host cell nucleus"/>
    <property type="evidence" value="ECO:0007669"/>
    <property type="project" value="UniProtKB-SubCell"/>
</dbReference>
<dbReference type="GO" id="GO:0001907">
    <property type="term" value="P:symbiont-mediated killing of host cell"/>
    <property type="evidence" value="ECO:0000314"/>
    <property type="project" value="PAMGO_VMD"/>
</dbReference>
<dbReference type="InterPro" id="IPR045379">
    <property type="entry name" value="Crinkler_N"/>
</dbReference>
<dbReference type="Pfam" id="PF20147">
    <property type="entry name" value="Crinkler"/>
    <property type="match status" value="1"/>
</dbReference>
<protein>
    <recommendedName>
        <fullName evidence="6">Crinkler effector protein 2</fullName>
    </recommendedName>
</protein>